<gene>
    <name evidence="1" type="primary">tpiA1</name>
    <name type="ordered locus">LMOf2365_2430</name>
</gene>
<feature type="chain" id="PRO_0000090240" description="Triosephosphate isomerase 1">
    <location>
        <begin position="1"/>
        <end position="251"/>
    </location>
</feature>
<feature type="active site" description="Electrophile" evidence="1">
    <location>
        <position position="95"/>
    </location>
</feature>
<feature type="active site" description="Proton acceptor" evidence="1">
    <location>
        <position position="167"/>
    </location>
</feature>
<feature type="binding site" evidence="1">
    <location>
        <begin position="9"/>
        <end position="11"/>
    </location>
    <ligand>
        <name>substrate</name>
    </ligand>
</feature>
<feature type="binding site" evidence="1">
    <location>
        <position position="173"/>
    </location>
    <ligand>
        <name>substrate</name>
    </ligand>
</feature>
<feature type="binding site" evidence="1">
    <location>
        <position position="213"/>
    </location>
    <ligand>
        <name>substrate</name>
    </ligand>
</feature>
<feature type="binding site" evidence="1">
    <location>
        <begin position="234"/>
        <end position="235"/>
    </location>
    <ligand>
        <name>substrate</name>
    </ligand>
</feature>
<dbReference type="EC" id="5.3.1.1" evidence="1"/>
<dbReference type="EMBL" id="AE017262">
    <property type="protein sequence ID" value="AAT05196.1"/>
    <property type="molecule type" value="Genomic_DNA"/>
</dbReference>
<dbReference type="SMR" id="Q71WW9"/>
<dbReference type="KEGG" id="lmf:LMOf2365_2430"/>
<dbReference type="HOGENOM" id="CLU_024251_2_3_9"/>
<dbReference type="UniPathway" id="UPA00109">
    <property type="reaction ID" value="UER00189"/>
</dbReference>
<dbReference type="UniPathway" id="UPA00138"/>
<dbReference type="GO" id="GO:0005829">
    <property type="term" value="C:cytosol"/>
    <property type="evidence" value="ECO:0007669"/>
    <property type="project" value="TreeGrafter"/>
</dbReference>
<dbReference type="GO" id="GO:0004807">
    <property type="term" value="F:triose-phosphate isomerase activity"/>
    <property type="evidence" value="ECO:0007669"/>
    <property type="project" value="UniProtKB-UniRule"/>
</dbReference>
<dbReference type="GO" id="GO:0006094">
    <property type="term" value="P:gluconeogenesis"/>
    <property type="evidence" value="ECO:0007669"/>
    <property type="project" value="UniProtKB-UniRule"/>
</dbReference>
<dbReference type="GO" id="GO:0046166">
    <property type="term" value="P:glyceraldehyde-3-phosphate biosynthetic process"/>
    <property type="evidence" value="ECO:0007669"/>
    <property type="project" value="TreeGrafter"/>
</dbReference>
<dbReference type="GO" id="GO:0019563">
    <property type="term" value="P:glycerol catabolic process"/>
    <property type="evidence" value="ECO:0007669"/>
    <property type="project" value="TreeGrafter"/>
</dbReference>
<dbReference type="GO" id="GO:0006096">
    <property type="term" value="P:glycolytic process"/>
    <property type="evidence" value="ECO:0007669"/>
    <property type="project" value="UniProtKB-UniRule"/>
</dbReference>
<dbReference type="CDD" id="cd00311">
    <property type="entry name" value="TIM"/>
    <property type="match status" value="1"/>
</dbReference>
<dbReference type="FunFam" id="3.20.20.70:FF:000016">
    <property type="entry name" value="Triosephosphate isomerase"/>
    <property type="match status" value="1"/>
</dbReference>
<dbReference type="Gene3D" id="3.20.20.70">
    <property type="entry name" value="Aldolase class I"/>
    <property type="match status" value="1"/>
</dbReference>
<dbReference type="HAMAP" id="MF_00147_B">
    <property type="entry name" value="TIM_B"/>
    <property type="match status" value="1"/>
</dbReference>
<dbReference type="InterPro" id="IPR013785">
    <property type="entry name" value="Aldolase_TIM"/>
</dbReference>
<dbReference type="InterPro" id="IPR035990">
    <property type="entry name" value="TIM_sf"/>
</dbReference>
<dbReference type="InterPro" id="IPR022896">
    <property type="entry name" value="TrioseP_Isoase_bac/euk"/>
</dbReference>
<dbReference type="InterPro" id="IPR000652">
    <property type="entry name" value="Triosephosphate_isomerase"/>
</dbReference>
<dbReference type="InterPro" id="IPR020861">
    <property type="entry name" value="Triosephosphate_isomerase_AS"/>
</dbReference>
<dbReference type="NCBIfam" id="TIGR00419">
    <property type="entry name" value="tim"/>
    <property type="match status" value="1"/>
</dbReference>
<dbReference type="PANTHER" id="PTHR21139">
    <property type="entry name" value="TRIOSEPHOSPHATE ISOMERASE"/>
    <property type="match status" value="1"/>
</dbReference>
<dbReference type="PANTHER" id="PTHR21139:SF42">
    <property type="entry name" value="TRIOSEPHOSPHATE ISOMERASE"/>
    <property type="match status" value="1"/>
</dbReference>
<dbReference type="Pfam" id="PF00121">
    <property type="entry name" value="TIM"/>
    <property type="match status" value="1"/>
</dbReference>
<dbReference type="SUPFAM" id="SSF51351">
    <property type="entry name" value="Triosephosphate isomerase (TIM)"/>
    <property type="match status" value="1"/>
</dbReference>
<dbReference type="PROSITE" id="PS00171">
    <property type="entry name" value="TIM_1"/>
    <property type="match status" value="1"/>
</dbReference>
<dbReference type="PROSITE" id="PS51440">
    <property type="entry name" value="TIM_2"/>
    <property type="match status" value="1"/>
</dbReference>
<keyword id="KW-0963">Cytoplasm</keyword>
<keyword id="KW-0312">Gluconeogenesis</keyword>
<keyword id="KW-0324">Glycolysis</keyword>
<keyword id="KW-0413">Isomerase</keyword>
<sequence>MRKPIIAGNWKMNKTAAKAGQFAEDVKNNVPSSDAVESVVAAPALFLQELVRLTEGTNLRVAAQNCYFEDEGAFTGEISPFALADLGVSYVIIGHSERREYFHETDEDINKKAHAIFKHGMTPIICCGETLDQREAGQTDTWVRGQIRAALAGLTEEQVIKSVIAYEPIWAIGTGKSSTSADANETCAVIRAEVADAVSQKAADAVRIQYGGSVKPENIADYLAESDIDGALVGGASLEPASFLALLEAVK</sequence>
<organism>
    <name type="scientific">Listeria monocytogenes serotype 4b (strain F2365)</name>
    <dbReference type="NCBI Taxonomy" id="265669"/>
    <lineage>
        <taxon>Bacteria</taxon>
        <taxon>Bacillati</taxon>
        <taxon>Bacillota</taxon>
        <taxon>Bacilli</taxon>
        <taxon>Bacillales</taxon>
        <taxon>Listeriaceae</taxon>
        <taxon>Listeria</taxon>
    </lineage>
</organism>
<proteinExistence type="inferred from homology"/>
<protein>
    <recommendedName>
        <fullName evidence="1">Triosephosphate isomerase 1</fullName>
        <shortName evidence="1">TIM 1</shortName>
        <shortName evidence="1">TPI 1</shortName>
        <ecNumber evidence="1">5.3.1.1</ecNumber>
    </recommendedName>
    <alternativeName>
        <fullName evidence="1">Triose-phosphate isomerase 1</fullName>
    </alternativeName>
</protein>
<evidence type="ECO:0000255" key="1">
    <source>
        <dbReference type="HAMAP-Rule" id="MF_00147"/>
    </source>
</evidence>
<reference key="1">
    <citation type="journal article" date="2004" name="Nucleic Acids Res.">
        <title>Whole genome comparisons of serotype 4b and 1/2a strains of the food-borne pathogen Listeria monocytogenes reveal new insights into the core genome components of this species.</title>
        <authorList>
            <person name="Nelson K.E."/>
            <person name="Fouts D.E."/>
            <person name="Mongodin E.F."/>
            <person name="Ravel J."/>
            <person name="DeBoy R.T."/>
            <person name="Kolonay J.F."/>
            <person name="Rasko D.A."/>
            <person name="Angiuoli S.V."/>
            <person name="Gill S.R."/>
            <person name="Paulsen I.T."/>
            <person name="Peterson J.D."/>
            <person name="White O."/>
            <person name="Nelson W.C."/>
            <person name="Nierman W.C."/>
            <person name="Beanan M.J."/>
            <person name="Brinkac L.M."/>
            <person name="Daugherty S.C."/>
            <person name="Dodson R.J."/>
            <person name="Durkin A.S."/>
            <person name="Madupu R."/>
            <person name="Haft D.H."/>
            <person name="Selengut J."/>
            <person name="Van Aken S.E."/>
            <person name="Khouri H.M."/>
            <person name="Fedorova N."/>
            <person name="Forberger H.A."/>
            <person name="Tran B."/>
            <person name="Kathariou S."/>
            <person name="Wonderling L.D."/>
            <person name="Uhlich G.A."/>
            <person name="Bayles D.O."/>
            <person name="Luchansky J.B."/>
            <person name="Fraser C.M."/>
        </authorList>
    </citation>
    <scope>NUCLEOTIDE SEQUENCE [LARGE SCALE GENOMIC DNA]</scope>
    <source>
        <strain>F2365</strain>
    </source>
</reference>
<name>TPIS1_LISMF</name>
<accession>Q71WW9</accession>
<comment type="function">
    <text evidence="1">Involved in the gluconeogenesis. Catalyzes stereospecifically the conversion of dihydroxyacetone phosphate (DHAP) to D-glyceraldehyde-3-phosphate (G3P).</text>
</comment>
<comment type="catalytic activity">
    <reaction evidence="1">
        <text>D-glyceraldehyde 3-phosphate = dihydroxyacetone phosphate</text>
        <dbReference type="Rhea" id="RHEA:18585"/>
        <dbReference type="ChEBI" id="CHEBI:57642"/>
        <dbReference type="ChEBI" id="CHEBI:59776"/>
        <dbReference type="EC" id="5.3.1.1"/>
    </reaction>
</comment>
<comment type="pathway">
    <text evidence="1">Carbohydrate biosynthesis; gluconeogenesis.</text>
</comment>
<comment type="pathway">
    <text evidence="1">Carbohydrate degradation; glycolysis; D-glyceraldehyde 3-phosphate from glycerone phosphate: step 1/1.</text>
</comment>
<comment type="subunit">
    <text evidence="1">Homodimer.</text>
</comment>
<comment type="subcellular location">
    <subcellularLocation>
        <location evidence="1">Cytoplasm</location>
    </subcellularLocation>
</comment>
<comment type="similarity">
    <text evidence="1">Belongs to the triosephosphate isomerase family.</text>
</comment>